<accession>Q8EL04</accession>
<feature type="chain" id="PRO_0000058979" description="Putative HPr kinase/phosphorylase 2">
    <location>
        <begin position="1"/>
        <end position="306"/>
    </location>
</feature>
<feature type="region of interest" description="Important for the catalytic mechanism of both phosphorylation and dephosphorylation" evidence="1">
    <location>
        <begin position="201"/>
        <end position="210"/>
    </location>
</feature>
<feature type="region of interest" description="Important for the catalytic mechanism of dephosphorylation" evidence="1">
    <location>
        <begin position="264"/>
        <end position="269"/>
    </location>
</feature>
<feature type="active site" evidence="1">
    <location>
        <position position="138"/>
    </location>
</feature>
<feature type="active site" evidence="1">
    <location>
        <position position="159"/>
    </location>
</feature>
<feature type="active site" description="Proton acceptor; for phosphorylation activity. Proton donor; for dephosphorylation activity" evidence="1">
    <location>
        <position position="177"/>
    </location>
</feature>
<feature type="binding site" evidence="1">
    <location>
        <begin position="153"/>
        <end position="160"/>
    </location>
    <ligand>
        <name>ATP</name>
        <dbReference type="ChEBI" id="CHEBI:30616"/>
    </ligand>
</feature>
<feature type="binding site" evidence="2">
    <location>
        <position position="160"/>
    </location>
    <ligand>
        <name>Mg(2+)</name>
        <dbReference type="ChEBI" id="CHEBI:18420"/>
    </ligand>
</feature>
<organism>
    <name type="scientific">Oceanobacillus iheyensis (strain DSM 14371 / CIP 107618 / JCM 11309 / KCTC 3954 / HTE831)</name>
    <dbReference type="NCBI Taxonomy" id="221109"/>
    <lineage>
        <taxon>Bacteria</taxon>
        <taxon>Bacillati</taxon>
        <taxon>Bacillota</taxon>
        <taxon>Bacilli</taxon>
        <taxon>Bacillales</taxon>
        <taxon>Bacillaceae</taxon>
        <taxon>Oceanobacillus</taxon>
    </lineage>
</organism>
<reference key="1">
    <citation type="journal article" date="2002" name="Nucleic Acids Res.">
        <title>Genome sequence of Oceanobacillus iheyensis isolated from the Iheya Ridge and its unexpected adaptive capabilities to extreme environments.</title>
        <authorList>
            <person name="Takami H."/>
            <person name="Takaki Y."/>
            <person name="Uchiyama I."/>
        </authorList>
    </citation>
    <scope>NUCLEOTIDE SEQUENCE [LARGE SCALE GENOMIC DNA]</scope>
    <source>
        <strain>DSM 14371 / CIP 107618 / JCM 11309 / KCTC 3954 / HTE831</strain>
    </source>
</reference>
<keyword id="KW-0067">ATP-binding</keyword>
<keyword id="KW-0119">Carbohydrate metabolism</keyword>
<keyword id="KW-0418">Kinase</keyword>
<keyword id="KW-0460">Magnesium</keyword>
<keyword id="KW-0479">Metal-binding</keyword>
<keyword id="KW-0511">Multifunctional enzyme</keyword>
<keyword id="KW-0547">Nucleotide-binding</keyword>
<keyword id="KW-1185">Reference proteome</keyword>
<keyword id="KW-0723">Serine/threonine-protein kinase</keyword>
<keyword id="KW-0808">Transferase</keyword>
<evidence type="ECO:0000250" key="1"/>
<evidence type="ECO:0000255" key="2"/>
<evidence type="ECO:0000305" key="3"/>
<gene>
    <name type="primary">hprK2</name>
    <name type="ordered locus">OB3428</name>
</gene>
<proteinExistence type="inferred from homology"/>
<comment type="function">
    <text evidence="1">Catalyzes the ATP- as well as the pyrophosphate-dependent phosphorylation of a specific serine residue in HPr, a phosphocarrier protein of the phosphoenolpyruvate-dependent sugar phosphotransferase system (PTS). HprK/P also catalyzes the pyrophosphate-producing, inorganic phosphate-dependent dephosphorylation (phosphorolysis) of seryl-phosphorylated HPr (P-Ser-HPr). The two antagonistic activities of HprK/P are regulated by several intracellular metabolites, which change their concentration in response to the absence or presence of rapidly metabolisable carbon sources (glucose, fructose, etc.) in the growth medium. Also phosphorylates/dephosphorylates the HPr-like catabolite repression protein crh on a specific serine residue. Therefore, by controlling the phosphorylation state of HPr and crh, HPrK/P is a sensor enzyme that plays a major role in the regulation of carbon metabolism and sugar transport: it mediates carbon catabolite repression (CCR), and regulates PTS-catalyzed carbohydrate uptake and inducer exclusion (By similarity).</text>
</comment>
<comment type="catalytic activity">
    <reaction>
        <text>[HPr protein]-L-serine + ATP = [HPr protein]-O-phospho-L-serine + ADP + H(+)</text>
        <dbReference type="Rhea" id="RHEA:46600"/>
        <dbReference type="Rhea" id="RHEA-COMP:11602"/>
        <dbReference type="Rhea" id="RHEA-COMP:11603"/>
        <dbReference type="ChEBI" id="CHEBI:15378"/>
        <dbReference type="ChEBI" id="CHEBI:29999"/>
        <dbReference type="ChEBI" id="CHEBI:30616"/>
        <dbReference type="ChEBI" id="CHEBI:83421"/>
        <dbReference type="ChEBI" id="CHEBI:456216"/>
    </reaction>
</comment>
<comment type="catalytic activity">
    <reaction>
        <text>[HPr protein]-O-phospho-L-serine + phosphate + H(+) = [HPr protein]-L-serine + diphosphate</text>
        <dbReference type="Rhea" id="RHEA:46604"/>
        <dbReference type="Rhea" id="RHEA-COMP:11602"/>
        <dbReference type="Rhea" id="RHEA-COMP:11603"/>
        <dbReference type="ChEBI" id="CHEBI:15378"/>
        <dbReference type="ChEBI" id="CHEBI:29999"/>
        <dbReference type="ChEBI" id="CHEBI:33019"/>
        <dbReference type="ChEBI" id="CHEBI:43474"/>
        <dbReference type="ChEBI" id="CHEBI:83421"/>
    </reaction>
</comment>
<comment type="cofactor">
    <cofactor evidence="1">
        <name>Mg(2+)</name>
        <dbReference type="ChEBI" id="CHEBI:18420"/>
    </cofactor>
</comment>
<comment type="subunit">
    <text evidence="1">Homohexamer.</text>
</comment>
<comment type="domain">
    <text evidence="1">The Walker A ATP-binding motif also binds Pi and PPi.</text>
</comment>
<comment type="miscellaneous">
    <text evidence="1">Both phosphorylation and phosphorolysis are carried out by the same active site and suggest a common mechanism for both reactions.</text>
</comment>
<comment type="similarity">
    <text evidence="3">Belongs to the HPrK/P family.</text>
</comment>
<comment type="caution">
    <text evidence="3">In this second copy of HPRK/P in O.iheyensis, Ala-202 and Glu-243 are present instead of the conserved Glu and Arg which are respectively expected to be part of the active site.</text>
</comment>
<sequence length="306" mass="35049">MKSIQVQQLVEEFNLEVLAGEDHRERTITKSRTHRPGLEFIGYFDFFPMERVQILGKKEINYLHQLNEQERDIRIGNVVNYHPPCFIVTSDQDGLTYLKKYCHAEQIPLLRTKEATVDFMAKVDHYLTRKLAPEIAVHGVCMNVLGIGILIRGESGVGKSELAHTLLGRGHRLVADDIVVLKRLSHKTILGTHNDKNKEFLALRSVGLLNVVRAYGSRAFQDETRISLDIKLSKWEKDSLHNELEFETQYRDYMGVSVPSIEIQLQPGRDVAGLIEAAANNWYLQQQGYSAAEDFMNRIEWQDGDD</sequence>
<protein>
    <recommendedName>
        <fullName>Putative HPr kinase/phosphorylase 2</fullName>
        <shortName>HPrK/P 2</shortName>
        <ecNumber>2.7.11.-</ecNumber>
        <ecNumber>2.7.4.-</ecNumber>
    </recommendedName>
    <alternativeName>
        <fullName>HPr(Ser) kinase/phosphorylase 2</fullName>
    </alternativeName>
</protein>
<dbReference type="EC" id="2.7.11.-"/>
<dbReference type="EC" id="2.7.4.-"/>
<dbReference type="EMBL" id="BA000028">
    <property type="protein sequence ID" value="BAC15384.1"/>
    <property type="molecule type" value="Genomic_DNA"/>
</dbReference>
<dbReference type="RefSeq" id="WP_011067826.1">
    <property type="nucleotide sequence ID" value="NC_004193.1"/>
</dbReference>
<dbReference type="SMR" id="Q8EL04"/>
<dbReference type="STRING" id="221109.gene:10735680"/>
<dbReference type="KEGG" id="oih:OB3428"/>
<dbReference type="eggNOG" id="COG1493">
    <property type="taxonomic scope" value="Bacteria"/>
</dbReference>
<dbReference type="HOGENOM" id="CLU_052030_0_1_9"/>
<dbReference type="OrthoDB" id="9778803at2"/>
<dbReference type="PhylomeDB" id="Q8EL04"/>
<dbReference type="Proteomes" id="UP000000822">
    <property type="component" value="Chromosome"/>
</dbReference>
<dbReference type="GO" id="GO:0005524">
    <property type="term" value="F:ATP binding"/>
    <property type="evidence" value="ECO:0007669"/>
    <property type="project" value="UniProtKB-UniRule"/>
</dbReference>
<dbReference type="GO" id="GO:0000287">
    <property type="term" value="F:magnesium ion binding"/>
    <property type="evidence" value="ECO:0007669"/>
    <property type="project" value="UniProtKB-UniRule"/>
</dbReference>
<dbReference type="GO" id="GO:0000155">
    <property type="term" value="F:phosphorelay sensor kinase activity"/>
    <property type="evidence" value="ECO:0007669"/>
    <property type="project" value="InterPro"/>
</dbReference>
<dbReference type="GO" id="GO:0004674">
    <property type="term" value="F:protein serine/threonine kinase activity"/>
    <property type="evidence" value="ECO:0007669"/>
    <property type="project" value="UniProtKB-KW"/>
</dbReference>
<dbReference type="GO" id="GO:0004712">
    <property type="term" value="F:protein serine/threonine/tyrosine kinase activity"/>
    <property type="evidence" value="ECO:0007669"/>
    <property type="project" value="UniProtKB-UniRule"/>
</dbReference>
<dbReference type="GO" id="GO:0006109">
    <property type="term" value="P:regulation of carbohydrate metabolic process"/>
    <property type="evidence" value="ECO:0007669"/>
    <property type="project" value="UniProtKB-UniRule"/>
</dbReference>
<dbReference type="CDD" id="cd01918">
    <property type="entry name" value="HprK_C"/>
    <property type="match status" value="1"/>
</dbReference>
<dbReference type="Gene3D" id="3.40.1390.20">
    <property type="entry name" value="HprK N-terminal domain-like"/>
    <property type="match status" value="1"/>
</dbReference>
<dbReference type="Gene3D" id="3.40.50.300">
    <property type="entry name" value="P-loop containing nucleotide triphosphate hydrolases"/>
    <property type="match status" value="1"/>
</dbReference>
<dbReference type="HAMAP" id="MF_01249">
    <property type="entry name" value="HPr_kinase"/>
    <property type="match status" value="1"/>
</dbReference>
<dbReference type="InterPro" id="IPR003755">
    <property type="entry name" value="HPr(Ser)_kin/Pase"/>
</dbReference>
<dbReference type="InterPro" id="IPR011104">
    <property type="entry name" value="Hpr_kin/Pase_C"/>
</dbReference>
<dbReference type="InterPro" id="IPR011126">
    <property type="entry name" value="Hpr_kin/Pase_Hpr_N"/>
</dbReference>
<dbReference type="InterPro" id="IPR027417">
    <property type="entry name" value="P-loop_NTPase"/>
</dbReference>
<dbReference type="InterPro" id="IPR028979">
    <property type="entry name" value="Ser_kin/Pase_Hpr-like_N_sf"/>
</dbReference>
<dbReference type="InterPro" id="IPR025662">
    <property type="entry name" value="Sigma_54_int_dom_ATP-bd_1"/>
</dbReference>
<dbReference type="NCBIfam" id="TIGR00679">
    <property type="entry name" value="hpr-ser"/>
    <property type="match status" value="1"/>
</dbReference>
<dbReference type="PANTHER" id="PTHR30305:SF1">
    <property type="entry name" value="HPR KINASE_PHOSPHORYLASE"/>
    <property type="match status" value="1"/>
</dbReference>
<dbReference type="PANTHER" id="PTHR30305">
    <property type="entry name" value="PROTEIN YJDM-RELATED"/>
    <property type="match status" value="1"/>
</dbReference>
<dbReference type="Pfam" id="PF07475">
    <property type="entry name" value="Hpr_kinase_C"/>
    <property type="match status" value="1"/>
</dbReference>
<dbReference type="Pfam" id="PF02603">
    <property type="entry name" value="Hpr_kinase_N"/>
    <property type="match status" value="1"/>
</dbReference>
<dbReference type="SUPFAM" id="SSF75138">
    <property type="entry name" value="HprK N-terminal domain-like"/>
    <property type="match status" value="1"/>
</dbReference>
<dbReference type="SUPFAM" id="SSF53795">
    <property type="entry name" value="PEP carboxykinase-like"/>
    <property type="match status" value="1"/>
</dbReference>
<name>HPRK2_OCEIH</name>